<gene>
    <name evidence="1" type="primary">hemL</name>
    <name type="ordered locus">CTC_00730</name>
</gene>
<keyword id="KW-0963">Cytoplasm</keyword>
<keyword id="KW-0413">Isomerase</keyword>
<keyword id="KW-0627">Porphyrin biosynthesis</keyword>
<keyword id="KW-0663">Pyridoxal phosphate</keyword>
<keyword id="KW-1185">Reference proteome</keyword>
<dbReference type="EC" id="5.4.3.8" evidence="1"/>
<dbReference type="EMBL" id="AE015927">
    <property type="protein sequence ID" value="AAO35332.1"/>
    <property type="molecule type" value="Genomic_DNA"/>
</dbReference>
<dbReference type="RefSeq" id="WP_011098998.1">
    <property type="nucleotide sequence ID" value="NC_004557.1"/>
</dbReference>
<dbReference type="SMR" id="Q897K4"/>
<dbReference type="STRING" id="212717.CTC_00730"/>
<dbReference type="GeneID" id="24253222"/>
<dbReference type="KEGG" id="ctc:CTC_00730"/>
<dbReference type="HOGENOM" id="CLU_016922_1_5_9"/>
<dbReference type="OrthoDB" id="9807885at2"/>
<dbReference type="UniPathway" id="UPA00251">
    <property type="reaction ID" value="UER00317"/>
</dbReference>
<dbReference type="Proteomes" id="UP000001412">
    <property type="component" value="Chromosome"/>
</dbReference>
<dbReference type="GO" id="GO:0005737">
    <property type="term" value="C:cytoplasm"/>
    <property type="evidence" value="ECO:0007669"/>
    <property type="project" value="UniProtKB-SubCell"/>
</dbReference>
<dbReference type="GO" id="GO:0042286">
    <property type="term" value="F:glutamate-1-semialdehyde 2,1-aminomutase activity"/>
    <property type="evidence" value="ECO:0007669"/>
    <property type="project" value="UniProtKB-UniRule"/>
</dbReference>
<dbReference type="GO" id="GO:0030170">
    <property type="term" value="F:pyridoxal phosphate binding"/>
    <property type="evidence" value="ECO:0007669"/>
    <property type="project" value="InterPro"/>
</dbReference>
<dbReference type="GO" id="GO:0008483">
    <property type="term" value="F:transaminase activity"/>
    <property type="evidence" value="ECO:0007669"/>
    <property type="project" value="InterPro"/>
</dbReference>
<dbReference type="GO" id="GO:0006782">
    <property type="term" value="P:protoporphyrinogen IX biosynthetic process"/>
    <property type="evidence" value="ECO:0007669"/>
    <property type="project" value="UniProtKB-UniRule"/>
</dbReference>
<dbReference type="CDD" id="cd00610">
    <property type="entry name" value="OAT_like"/>
    <property type="match status" value="1"/>
</dbReference>
<dbReference type="FunFam" id="3.40.640.10:FF:000021">
    <property type="entry name" value="Glutamate-1-semialdehyde 2,1-aminomutase"/>
    <property type="match status" value="1"/>
</dbReference>
<dbReference type="Gene3D" id="3.90.1150.10">
    <property type="entry name" value="Aspartate Aminotransferase, domain 1"/>
    <property type="match status" value="1"/>
</dbReference>
<dbReference type="Gene3D" id="3.40.640.10">
    <property type="entry name" value="Type I PLP-dependent aspartate aminotransferase-like (Major domain)"/>
    <property type="match status" value="1"/>
</dbReference>
<dbReference type="HAMAP" id="MF_00375">
    <property type="entry name" value="HemL_aminotrans_3"/>
    <property type="match status" value="1"/>
</dbReference>
<dbReference type="InterPro" id="IPR004639">
    <property type="entry name" value="4pyrrol_synth_GluAld_NH2Trfase"/>
</dbReference>
<dbReference type="InterPro" id="IPR005814">
    <property type="entry name" value="Aminotrans_3"/>
</dbReference>
<dbReference type="InterPro" id="IPR049704">
    <property type="entry name" value="Aminotrans_3_PPA_site"/>
</dbReference>
<dbReference type="InterPro" id="IPR015424">
    <property type="entry name" value="PyrdxlP-dep_Trfase"/>
</dbReference>
<dbReference type="InterPro" id="IPR015421">
    <property type="entry name" value="PyrdxlP-dep_Trfase_major"/>
</dbReference>
<dbReference type="InterPro" id="IPR015422">
    <property type="entry name" value="PyrdxlP-dep_Trfase_small"/>
</dbReference>
<dbReference type="NCBIfam" id="TIGR00713">
    <property type="entry name" value="hemL"/>
    <property type="match status" value="1"/>
</dbReference>
<dbReference type="NCBIfam" id="NF000818">
    <property type="entry name" value="PRK00062.1"/>
    <property type="match status" value="1"/>
</dbReference>
<dbReference type="PANTHER" id="PTHR43713">
    <property type="entry name" value="GLUTAMATE-1-SEMIALDEHYDE 2,1-AMINOMUTASE"/>
    <property type="match status" value="1"/>
</dbReference>
<dbReference type="PANTHER" id="PTHR43713:SF3">
    <property type="entry name" value="GLUTAMATE-1-SEMIALDEHYDE 2,1-AMINOMUTASE 1, CHLOROPLASTIC-RELATED"/>
    <property type="match status" value="1"/>
</dbReference>
<dbReference type="Pfam" id="PF00202">
    <property type="entry name" value="Aminotran_3"/>
    <property type="match status" value="1"/>
</dbReference>
<dbReference type="SUPFAM" id="SSF53383">
    <property type="entry name" value="PLP-dependent transferases"/>
    <property type="match status" value="1"/>
</dbReference>
<dbReference type="PROSITE" id="PS00600">
    <property type="entry name" value="AA_TRANSFER_CLASS_3"/>
    <property type="match status" value="1"/>
</dbReference>
<accession>Q897K4</accession>
<name>GSA_CLOTE</name>
<sequence length="422" mass="46725">MNNLEIFKESEKYMPGGVNSPVRAFSNASINPPIIKKGLGSRIVDEEGKEYIDFVASWGPMILGHNDPEVVEAIQNTVEDAISFGAPTELELKLAKHMVETLDNIDMVRMVNSGTEATMSAIKLARGYTRRDRIIKFAGCYHGHFDGFLVEAGSGVLTERIPGSPGVPKGSIENTLIAEYNHIDTVEALFEKYPEEIAAIIIEPIAGNMGTIPAKTEFLQRLREICTKYGALLIFDEVMTGFRVAYKGAQSRYGVKPDLTTYAKIMGGGLPSGAYGGRRDIMEKLSPIGPVYQAGTMSGNPVVMAAGYTTLRKLYNNPSYYEHMEKIGAELQKGIEIVAKEKGLPVVVNRCGAMLTPFFSKRDKVADYEDAKSSDTELYGRFFEHMIKSGIYIAPSQFEAMFIGVKHDIYEVERFLEAMRKF</sequence>
<organism>
    <name type="scientific">Clostridium tetani (strain Massachusetts / E88)</name>
    <dbReference type="NCBI Taxonomy" id="212717"/>
    <lineage>
        <taxon>Bacteria</taxon>
        <taxon>Bacillati</taxon>
        <taxon>Bacillota</taxon>
        <taxon>Clostridia</taxon>
        <taxon>Eubacteriales</taxon>
        <taxon>Clostridiaceae</taxon>
        <taxon>Clostridium</taxon>
    </lineage>
</organism>
<comment type="catalytic activity">
    <reaction evidence="1">
        <text>(S)-4-amino-5-oxopentanoate = 5-aminolevulinate</text>
        <dbReference type="Rhea" id="RHEA:14265"/>
        <dbReference type="ChEBI" id="CHEBI:57501"/>
        <dbReference type="ChEBI" id="CHEBI:356416"/>
        <dbReference type="EC" id="5.4.3.8"/>
    </reaction>
</comment>
<comment type="cofactor">
    <cofactor evidence="1">
        <name>pyridoxal 5'-phosphate</name>
        <dbReference type="ChEBI" id="CHEBI:597326"/>
    </cofactor>
</comment>
<comment type="pathway">
    <text evidence="1">Porphyrin-containing compound metabolism; protoporphyrin-IX biosynthesis; 5-aminolevulinate from L-glutamyl-tRNA(Glu): step 2/2.</text>
</comment>
<comment type="subunit">
    <text evidence="1">Homodimer.</text>
</comment>
<comment type="subcellular location">
    <subcellularLocation>
        <location evidence="1">Cytoplasm</location>
    </subcellularLocation>
</comment>
<comment type="similarity">
    <text evidence="1">Belongs to the class-III pyridoxal-phosphate-dependent aminotransferase family. HemL subfamily.</text>
</comment>
<feature type="chain" id="PRO_0000120403" description="Glutamate-1-semialdehyde 2,1-aminomutase">
    <location>
        <begin position="1"/>
        <end position="422"/>
    </location>
</feature>
<feature type="modified residue" description="N6-(pyridoxal phosphate)lysine" evidence="1">
    <location>
        <position position="264"/>
    </location>
</feature>
<evidence type="ECO:0000255" key="1">
    <source>
        <dbReference type="HAMAP-Rule" id="MF_00375"/>
    </source>
</evidence>
<proteinExistence type="inferred from homology"/>
<reference key="1">
    <citation type="journal article" date="2003" name="Proc. Natl. Acad. Sci. U.S.A.">
        <title>The genome sequence of Clostridium tetani, the causative agent of tetanus disease.</title>
        <authorList>
            <person name="Brueggemann H."/>
            <person name="Baeumer S."/>
            <person name="Fricke W.F."/>
            <person name="Wiezer A."/>
            <person name="Liesegang H."/>
            <person name="Decker I."/>
            <person name="Herzberg C."/>
            <person name="Martinez-Arias R."/>
            <person name="Merkl R."/>
            <person name="Henne A."/>
            <person name="Gottschalk G."/>
        </authorList>
    </citation>
    <scope>NUCLEOTIDE SEQUENCE [LARGE SCALE GENOMIC DNA]</scope>
    <source>
        <strain>Massachusetts / E88</strain>
    </source>
</reference>
<protein>
    <recommendedName>
        <fullName evidence="1">Glutamate-1-semialdehyde 2,1-aminomutase</fullName>
        <shortName evidence="1">GSA</shortName>
        <ecNumber evidence="1">5.4.3.8</ecNumber>
    </recommendedName>
    <alternativeName>
        <fullName evidence="1">Glutamate-1-semialdehyde aminotransferase</fullName>
        <shortName evidence="1">GSA-AT</shortName>
    </alternativeName>
</protein>